<sequence length="683" mass="75042">MPEAQSRFRRRLLLYYGLFTLGLFGFVGMMGLLEKSNADALWLGYVFLFITIAIYACIGLICRTSDLNEYYVASRRVPALFNGMAIAADWMSAASFIGLAGILFASGYEGLAYVMGWTGGYCLVAFLLAPYLRKYGGYTIPDFLAARYGNGKPGGNLPVRAIAVLAASLCSFVYLVAQIQGVGLVVTRFIGVEFAVGIFFGLAGILVCSFLGGMRAVTWTQVAQYIMMIVAFLVTVSMIAWKHHHEALPQLSYGTLLSQLDAREQQLEREPAEQAVREYYRQQAILLQERIARLPDSFAQERDALDARLQDLRTRNAPLRDIKSLERERLEFPRDPAAAQQQWNQQRADALARSRHSLSSTEPYPAASEQERKTKRLNFVLLVFCLMVGTASLPHILTRLYTTPSVKETRNSVAWAVFFIALLYVSAPTLAALVKFEFFQHLVGTPYAELPQWVVQWRKVDPPVFGIRDVNGDGIVQWAEILLQPDMIVLAAPEIAGLPYVISGLIAAGALAAALSTADGLLLTIANALSHDVFYHMVDRQASHQRRVTTAKIVLLGVALFASYVTSLRPGNILFLVGAAFSLAASSFFPVLVLGIFWRRTTAAGAVAGMAAGLGVAVYYIIVNYPFFTRMTGIFGNRWFGVDPIASGAFGVPAGFAVAIIVSLLTPRNAPVIDRLVSYLRKG</sequence>
<proteinExistence type="inferred from homology"/>
<gene>
    <name type="ordered locus">H16_A2524</name>
</gene>
<protein>
    <recommendedName>
        <fullName>Uncharacterized symporter H16_A2524</fullName>
    </recommendedName>
</protein>
<feature type="chain" id="PRO_0000105419" description="Uncharacterized symporter H16_A2524">
    <location>
        <begin position="1"/>
        <end position="683"/>
    </location>
</feature>
<feature type="transmembrane region" description="Helical" evidence="1">
    <location>
        <begin position="12"/>
        <end position="32"/>
    </location>
</feature>
<feature type="transmembrane region" description="Helical" evidence="1">
    <location>
        <begin position="41"/>
        <end position="61"/>
    </location>
</feature>
<feature type="transmembrane region" description="Helical" evidence="1">
    <location>
        <begin position="84"/>
        <end position="104"/>
    </location>
</feature>
<feature type="transmembrane region" description="Helical" evidence="1">
    <location>
        <begin position="110"/>
        <end position="130"/>
    </location>
</feature>
<feature type="transmembrane region" description="Helical" evidence="1">
    <location>
        <begin position="162"/>
        <end position="182"/>
    </location>
</feature>
<feature type="transmembrane region" description="Helical" evidence="1">
    <location>
        <begin position="194"/>
        <end position="214"/>
    </location>
</feature>
<feature type="transmembrane region" description="Helical" evidence="1">
    <location>
        <begin position="221"/>
        <end position="241"/>
    </location>
</feature>
<feature type="transmembrane region" description="Helical" evidence="1">
    <location>
        <begin position="377"/>
        <end position="397"/>
    </location>
</feature>
<feature type="transmembrane region" description="Helical" evidence="1">
    <location>
        <begin position="413"/>
        <end position="433"/>
    </location>
</feature>
<feature type="transmembrane region" description="Helical" evidence="1">
    <location>
        <begin position="495"/>
        <end position="515"/>
    </location>
</feature>
<feature type="transmembrane region" description="Helical" evidence="1">
    <location>
        <begin position="548"/>
        <end position="568"/>
    </location>
</feature>
<feature type="transmembrane region" description="Helical" evidence="1">
    <location>
        <begin position="573"/>
        <end position="593"/>
    </location>
</feature>
<feature type="transmembrane region" description="Helical" evidence="1">
    <location>
        <begin position="603"/>
        <end position="623"/>
    </location>
</feature>
<feature type="transmembrane region" description="Helical" evidence="1">
    <location>
        <begin position="645"/>
        <end position="665"/>
    </location>
</feature>
<organism>
    <name type="scientific">Cupriavidus necator (strain ATCC 17699 / DSM 428 / KCTC 22496 / NCIMB 10442 / H16 / Stanier 337)</name>
    <name type="common">Ralstonia eutropha</name>
    <dbReference type="NCBI Taxonomy" id="381666"/>
    <lineage>
        <taxon>Bacteria</taxon>
        <taxon>Pseudomonadati</taxon>
        <taxon>Pseudomonadota</taxon>
        <taxon>Betaproteobacteria</taxon>
        <taxon>Burkholderiales</taxon>
        <taxon>Burkholderiaceae</taxon>
        <taxon>Cupriavidus</taxon>
    </lineage>
</organism>
<evidence type="ECO:0000255" key="1"/>
<evidence type="ECO:0000305" key="2"/>
<dbReference type="EMBL" id="AM260479">
    <property type="protein sequence ID" value="CAJ93611.1"/>
    <property type="molecule type" value="Genomic_DNA"/>
</dbReference>
<dbReference type="EMBL" id="M97217">
    <property type="protein sequence ID" value="AAA21946.1"/>
    <property type="molecule type" value="Genomic_DNA"/>
</dbReference>
<dbReference type="PIR" id="B45736">
    <property type="entry name" value="B45736"/>
</dbReference>
<dbReference type="RefSeq" id="WP_010814366.1">
    <property type="nucleotide sequence ID" value="NZ_CP039287.1"/>
</dbReference>
<dbReference type="SMR" id="P31640"/>
<dbReference type="STRING" id="381666.H16_A2524"/>
<dbReference type="KEGG" id="reh:H16_A2524"/>
<dbReference type="eggNOG" id="COG4147">
    <property type="taxonomic scope" value="Bacteria"/>
</dbReference>
<dbReference type="HOGENOM" id="CLU_018808_8_2_4"/>
<dbReference type="OrthoDB" id="9764416at2"/>
<dbReference type="Proteomes" id="UP000008210">
    <property type="component" value="Chromosome 1"/>
</dbReference>
<dbReference type="GO" id="GO:0005886">
    <property type="term" value="C:plasma membrane"/>
    <property type="evidence" value="ECO:0007669"/>
    <property type="project" value="UniProtKB-SubCell"/>
</dbReference>
<dbReference type="GO" id="GO:0015293">
    <property type="term" value="F:symporter activity"/>
    <property type="evidence" value="ECO:0007669"/>
    <property type="project" value="UniProtKB-KW"/>
</dbReference>
<dbReference type="GO" id="GO:0006814">
    <property type="term" value="P:sodium ion transport"/>
    <property type="evidence" value="ECO:0007669"/>
    <property type="project" value="UniProtKB-KW"/>
</dbReference>
<dbReference type="CDD" id="cd11480">
    <property type="entry name" value="SLC5sbd_u4"/>
    <property type="match status" value="1"/>
</dbReference>
<dbReference type="Gene3D" id="1.20.1730.10">
    <property type="entry name" value="Sodium/glucose cotransporter"/>
    <property type="match status" value="1"/>
</dbReference>
<dbReference type="InterPro" id="IPR038377">
    <property type="entry name" value="Na/Glc_symporter_sf"/>
</dbReference>
<dbReference type="InterPro" id="IPR001734">
    <property type="entry name" value="Na/solute_symporter"/>
</dbReference>
<dbReference type="InterPro" id="IPR019899">
    <property type="entry name" value="Na/solute_symporter_VC_2705"/>
</dbReference>
<dbReference type="InterPro" id="IPR050277">
    <property type="entry name" value="Sodium:Solute_Symporter"/>
</dbReference>
<dbReference type="NCBIfam" id="TIGR03648">
    <property type="entry name" value="Na_symport_lg"/>
    <property type="match status" value="1"/>
</dbReference>
<dbReference type="PANTHER" id="PTHR48086:SF5">
    <property type="entry name" value="NA(+):SOLUTE SYMPORTER (SSF FAMILY)"/>
    <property type="match status" value="1"/>
</dbReference>
<dbReference type="PANTHER" id="PTHR48086">
    <property type="entry name" value="SODIUM/PROLINE SYMPORTER-RELATED"/>
    <property type="match status" value="1"/>
</dbReference>
<dbReference type="Pfam" id="PF00474">
    <property type="entry name" value="SSF"/>
    <property type="match status" value="2"/>
</dbReference>
<dbReference type="PROSITE" id="PS50283">
    <property type="entry name" value="NA_SOLUT_SYMP_3"/>
    <property type="match status" value="1"/>
</dbReference>
<accession>P31640</accession>
<accession>Q0K8R0</accession>
<comment type="subcellular location">
    <subcellularLocation>
        <location evidence="2">Cell membrane</location>
        <topology evidence="2">Multi-pass membrane protein</topology>
    </subcellularLocation>
</comment>
<comment type="similarity">
    <text evidence="2">Belongs to the sodium:solute symporter (SSF) (TC 2.A.21) family.</text>
</comment>
<keyword id="KW-1003">Cell membrane</keyword>
<keyword id="KW-0406">Ion transport</keyword>
<keyword id="KW-0472">Membrane</keyword>
<keyword id="KW-1185">Reference proteome</keyword>
<keyword id="KW-0915">Sodium</keyword>
<keyword id="KW-0739">Sodium transport</keyword>
<keyword id="KW-0769">Symport</keyword>
<keyword id="KW-0812">Transmembrane</keyword>
<keyword id="KW-1133">Transmembrane helix</keyword>
<keyword id="KW-0813">Transport</keyword>
<reference key="1">
    <citation type="journal article" date="2006" name="Nat. Biotechnol.">
        <title>Genome sequence of the bioplastic-producing 'Knallgas' bacterium Ralstonia eutropha H16.</title>
        <authorList>
            <person name="Pohlmann A."/>
            <person name="Fricke W.F."/>
            <person name="Reinecke F."/>
            <person name="Kusian B."/>
            <person name="Liesegang H."/>
            <person name="Cramm R."/>
            <person name="Eitinger T."/>
            <person name="Ewering C."/>
            <person name="Poetter M."/>
            <person name="Schwartz E."/>
            <person name="Strittmatter A."/>
            <person name="Voss I."/>
            <person name="Gottschalk G."/>
            <person name="Steinbuechel A."/>
            <person name="Friedrich B."/>
            <person name="Bowien B."/>
        </authorList>
    </citation>
    <scope>NUCLEOTIDE SEQUENCE [LARGE SCALE GENOMIC DNA]</scope>
    <source>
        <strain>ATCC 17699 / DSM 428 / KCTC 22496 / NCIMB 10442 / H16 / Stanier 337</strain>
    </source>
</reference>
<reference key="2">
    <citation type="journal article" date="1992" name="J. Bacteriol.">
        <title>Identification and molecular characterization of the acetyl coenzyme A synthetase gene (acoE) of Alcaligenes eutrophus.</title>
        <authorList>
            <person name="Priefert H."/>
            <person name="Steinbuechel A."/>
        </authorList>
    </citation>
    <scope>NUCLEOTIDE SEQUENCE [GENOMIC DNA] OF 1-332</scope>
</reference>
<name>Y2524_CUPNH</name>